<organism>
    <name type="scientific">Staphylococcus aureus (strain Mu50 / ATCC 700699)</name>
    <dbReference type="NCBI Taxonomy" id="158878"/>
    <lineage>
        <taxon>Bacteria</taxon>
        <taxon>Bacillati</taxon>
        <taxon>Bacillota</taxon>
        <taxon>Bacilli</taxon>
        <taxon>Bacillales</taxon>
        <taxon>Staphylococcaceae</taxon>
        <taxon>Staphylococcus</taxon>
    </lineage>
</organism>
<sequence length="249" mass="28124">MIKVTDVEKSYQSAHVFKRRRTPIVKGVSFECPIGATIAIIGESGSGKSTLSRMILGIEKPDKGCVTLNDLPMHKKKVRRHQIGAVFQDYTSSLHPFQTVREILFEVMCQCDGQPKEVMEVQAITLLEEVGLSKAYMDKYPNMLSGGEAQRVAIARAICINPKYILFDEAISSLDMSIQTQILDLLIHLRETRQLSYIFITHDIQAATYLCDQLIIFKNGKIEEQIPTSALHKSDNAYTRELIEKQLSF</sequence>
<feature type="chain" id="PRO_0000447278" description="Metal-staphylopine import system ATP-binding protein CntF">
    <location>
        <begin position="1"/>
        <end position="249"/>
    </location>
</feature>
<feature type="domain" description="ABC transporter" evidence="1">
    <location>
        <begin position="2"/>
        <end position="244"/>
    </location>
</feature>
<feature type="binding site" evidence="1">
    <location>
        <begin position="42"/>
        <end position="49"/>
    </location>
    <ligand>
        <name>ATP</name>
        <dbReference type="ChEBI" id="CHEBI:30616"/>
    </ligand>
</feature>
<dbReference type="EC" id="7.2.2.-" evidence="5"/>
<dbReference type="EMBL" id="BA000017">
    <property type="protein sequence ID" value="BAB58625.1"/>
    <property type="molecule type" value="Genomic_DNA"/>
</dbReference>
<dbReference type="RefSeq" id="WP_000598772.1">
    <property type="nucleotide sequence ID" value="NC_002758.2"/>
</dbReference>
<dbReference type="SMR" id="A0A0H3JT74"/>
<dbReference type="KEGG" id="sav:SAV2463"/>
<dbReference type="HOGENOM" id="CLU_000604_1_23_9"/>
<dbReference type="PhylomeDB" id="A0A0H3JT74"/>
<dbReference type="Proteomes" id="UP000002481">
    <property type="component" value="Chromosome"/>
</dbReference>
<dbReference type="GO" id="GO:0005886">
    <property type="term" value="C:plasma membrane"/>
    <property type="evidence" value="ECO:0007669"/>
    <property type="project" value="UniProtKB-SubCell"/>
</dbReference>
<dbReference type="GO" id="GO:0005524">
    <property type="term" value="F:ATP binding"/>
    <property type="evidence" value="ECO:0007669"/>
    <property type="project" value="UniProtKB-KW"/>
</dbReference>
<dbReference type="GO" id="GO:0016887">
    <property type="term" value="F:ATP hydrolysis activity"/>
    <property type="evidence" value="ECO:0007669"/>
    <property type="project" value="InterPro"/>
</dbReference>
<dbReference type="GO" id="GO:0006824">
    <property type="term" value="P:cobalt ion transport"/>
    <property type="evidence" value="ECO:0007669"/>
    <property type="project" value="UniProtKB-KW"/>
</dbReference>
<dbReference type="GO" id="GO:0006825">
    <property type="term" value="P:copper ion transport"/>
    <property type="evidence" value="ECO:0007669"/>
    <property type="project" value="UniProtKB-KW"/>
</dbReference>
<dbReference type="GO" id="GO:0006826">
    <property type="term" value="P:iron ion transport"/>
    <property type="evidence" value="ECO:0007669"/>
    <property type="project" value="UniProtKB-KW"/>
</dbReference>
<dbReference type="GO" id="GO:0015675">
    <property type="term" value="P:nickel cation transport"/>
    <property type="evidence" value="ECO:0007669"/>
    <property type="project" value="UniProtKB-KW"/>
</dbReference>
<dbReference type="GO" id="GO:0006829">
    <property type="term" value="P:zinc ion transport"/>
    <property type="evidence" value="ECO:0007669"/>
    <property type="project" value="UniProtKB-KW"/>
</dbReference>
<dbReference type="CDD" id="cd03257">
    <property type="entry name" value="ABC_NikE_OppD_transporters"/>
    <property type="match status" value="1"/>
</dbReference>
<dbReference type="Gene3D" id="3.40.50.300">
    <property type="entry name" value="P-loop containing nucleotide triphosphate hydrolases"/>
    <property type="match status" value="1"/>
</dbReference>
<dbReference type="InterPro" id="IPR003593">
    <property type="entry name" value="AAA+_ATPase"/>
</dbReference>
<dbReference type="InterPro" id="IPR050319">
    <property type="entry name" value="ABC_transp_ATP-bind"/>
</dbReference>
<dbReference type="InterPro" id="IPR003439">
    <property type="entry name" value="ABC_transporter-like_ATP-bd"/>
</dbReference>
<dbReference type="InterPro" id="IPR017871">
    <property type="entry name" value="ABC_transporter-like_CS"/>
</dbReference>
<dbReference type="InterPro" id="IPR027417">
    <property type="entry name" value="P-loop_NTPase"/>
</dbReference>
<dbReference type="PANTHER" id="PTHR43776:SF7">
    <property type="entry name" value="D,D-DIPEPTIDE TRANSPORT ATP-BINDING PROTEIN DDPF-RELATED"/>
    <property type="match status" value="1"/>
</dbReference>
<dbReference type="PANTHER" id="PTHR43776">
    <property type="entry name" value="TRANSPORT ATP-BINDING PROTEIN"/>
    <property type="match status" value="1"/>
</dbReference>
<dbReference type="Pfam" id="PF00005">
    <property type="entry name" value="ABC_tran"/>
    <property type="match status" value="1"/>
</dbReference>
<dbReference type="SMART" id="SM00382">
    <property type="entry name" value="AAA"/>
    <property type="match status" value="1"/>
</dbReference>
<dbReference type="SUPFAM" id="SSF52540">
    <property type="entry name" value="P-loop containing nucleoside triphosphate hydrolases"/>
    <property type="match status" value="1"/>
</dbReference>
<dbReference type="PROSITE" id="PS00211">
    <property type="entry name" value="ABC_TRANSPORTER_1"/>
    <property type="match status" value="1"/>
</dbReference>
<dbReference type="PROSITE" id="PS50893">
    <property type="entry name" value="ABC_TRANSPORTER_2"/>
    <property type="match status" value="1"/>
</dbReference>
<name>CNTF_STAAM</name>
<reference key="1">
    <citation type="journal article" date="2001" name="Lancet">
        <title>Whole genome sequencing of meticillin-resistant Staphylococcus aureus.</title>
        <authorList>
            <person name="Kuroda M."/>
            <person name="Ohta T."/>
            <person name="Uchiyama I."/>
            <person name="Baba T."/>
            <person name="Yuzawa H."/>
            <person name="Kobayashi I."/>
            <person name="Cui L."/>
            <person name="Oguchi A."/>
            <person name="Aoki K."/>
            <person name="Nagai Y."/>
            <person name="Lian J.-Q."/>
            <person name="Ito T."/>
            <person name="Kanamori M."/>
            <person name="Matsumaru H."/>
            <person name="Maruyama A."/>
            <person name="Murakami H."/>
            <person name="Hosoyama A."/>
            <person name="Mizutani-Ui Y."/>
            <person name="Takahashi N.K."/>
            <person name="Sawano T."/>
            <person name="Inoue R."/>
            <person name="Kaito C."/>
            <person name="Sekimizu K."/>
            <person name="Hirakawa H."/>
            <person name="Kuhara S."/>
            <person name="Goto S."/>
            <person name="Yabuzaki J."/>
            <person name="Kanehisa M."/>
            <person name="Yamashita A."/>
            <person name="Oshima K."/>
            <person name="Furuya K."/>
            <person name="Yoshino C."/>
            <person name="Shiba T."/>
            <person name="Hattori M."/>
            <person name="Ogasawara N."/>
            <person name="Hayashi H."/>
            <person name="Hiramatsu K."/>
        </authorList>
    </citation>
    <scope>NUCLEOTIDE SEQUENCE [LARGE SCALE GENOMIC DNA]</scope>
    <source>
        <strain>Mu50 / ATCC 700699</strain>
    </source>
</reference>
<reference key="2">
    <citation type="journal article" date="2016" name="Science">
        <title>Biosynthesis of a broad-spectrum nicotianamine-like metallophore in Staphylococcus aureus.</title>
        <authorList>
            <person name="Ghssein G."/>
            <person name="Brutesco C."/>
            <person name="Ouerdane L."/>
            <person name="Fojcik C."/>
            <person name="Izaute A."/>
            <person name="Wang S."/>
            <person name="Hajjar C."/>
            <person name="Lobinski R."/>
            <person name="Lemaire D."/>
            <person name="Richaud P."/>
            <person name="Voulhoux R."/>
            <person name="Espaillat A."/>
            <person name="Cava F."/>
            <person name="Pignol D."/>
            <person name="Borezee-Durant E."/>
            <person name="Arnoux P."/>
        </authorList>
    </citation>
    <scope>FUNCTION</scope>
    <scope>SUBUNIT</scope>
    <scope>INDUCTION</scope>
    <scope>DISRUPTION PHENOTYPE</scope>
    <source>
        <strain>Mu50 / ATCC 700699</strain>
    </source>
</reference>
<gene>
    <name evidence="3" type="primary">cntF</name>
    <name evidence="6" type="ordered locus">SAV2463</name>
</gene>
<proteinExistence type="evidence at protein level"/>
<protein>
    <recommendedName>
        <fullName evidence="4">Metal-staphylopine import system ATP-binding protein CntF</fullName>
        <ecNumber evidence="5">7.2.2.-</ecNumber>
    </recommendedName>
</protein>
<accession>A0A0H3JT74</accession>
<keyword id="KW-0067">ATP-binding</keyword>
<keyword id="KW-1003">Cell membrane</keyword>
<keyword id="KW-0170">Cobalt</keyword>
<keyword id="KW-0171">Cobalt transport</keyword>
<keyword id="KW-0186">Copper</keyword>
<keyword id="KW-0187">Copper transport</keyword>
<keyword id="KW-0406">Ion transport</keyword>
<keyword id="KW-0408">Iron</keyword>
<keyword id="KW-0410">Iron transport</keyword>
<keyword id="KW-0472">Membrane</keyword>
<keyword id="KW-0533">Nickel</keyword>
<keyword id="KW-0921">Nickel transport</keyword>
<keyword id="KW-0547">Nucleotide-binding</keyword>
<keyword id="KW-1278">Translocase</keyword>
<keyword id="KW-0813">Transport</keyword>
<keyword id="KW-0862">Zinc</keyword>
<keyword id="KW-0864">Zinc transport</keyword>
<evidence type="ECO:0000255" key="1">
    <source>
        <dbReference type="PROSITE-ProRule" id="PRU00434"/>
    </source>
</evidence>
<evidence type="ECO:0000269" key="2">
    <source>
    </source>
</evidence>
<evidence type="ECO:0000303" key="3">
    <source>
    </source>
</evidence>
<evidence type="ECO:0000305" key="4"/>
<evidence type="ECO:0000305" key="5">
    <source>
    </source>
</evidence>
<evidence type="ECO:0000312" key="6">
    <source>
        <dbReference type="EMBL" id="BAB58625.1"/>
    </source>
</evidence>
<comment type="function">
    <text evidence="2">Part of the ABC transporter complex CntABCDF (Opp1) involved in the uptake of metal in complex with the metallophore staphylopine (StP). May be involved in the import of a large array of divalent metals ions such as nickel, cobalt, zinc, copper and iron. Probably responsible for energy coupling to the transport system.</text>
</comment>
<comment type="subunit">
    <text evidence="5">The complex is composed of two ATP-binding proteins (CntD and CntF), two transmembrane proteins (CntB and CntC) and a solute-binding protein (CntA).</text>
</comment>
<comment type="subcellular location">
    <subcellularLocation>
        <location evidence="4">Cell membrane</location>
        <topology evidence="4">Peripheral membrane protein</topology>
    </subcellularLocation>
</comment>
<comment type="induction">
    <text evidence="2">Up-regulated in metal-poor media.</text>
</comment>
<comment type="disruption phenotype">
    <text evidence="2">Deletion of the cntABCDF genes decreases StP intracellular levels and decreases the import of iron, zinc, nickel and cobalt.</text>
</comment>
<comment type="similarity">
    <text evidence="4">Belongs to the ABC transporter superfamily.</text>
</comment>